<accession>B8ZPZ6</accession>
<evidence type="ECO:0000255" key="1">
    <source>
        <dbReference type="HAMAP-Rule" id="MF_01254"/>
    </source>
</evidence>
<dbReference type="EC" id="5.3.1.25" evidence="1"/>
<dbReference type="EMBL" id="FM211187">
    <property type="protein sequence ID" value="CAR69923.1"/>
    <property type="molecule type" value="Genomic_DNA"/>
</dbReference>
<dbReference type="RefSeq" id="WP_000614250.1">
    <property type="nucleotide sequence ID" value="NC_011900.1"/>
</dbReference>
<dbReference type="SMR" id="B8ZPZ6"/>
<dbReference type="KEGG" id="sne:SPN23F21900"/>
<dbReference type="HOGENOM" id="CLU_033326_1_0_9"/>
<dbReference type="UniPathway" id="UPA00563">
    <property type="reaction ID" value="UER00624"/>
</dbReference>
<dbReference type="GO" id="GO:0005737">
    <property type="term" value="C:cytoplasm"/>
    <property type="evidence" value="ECO:0007669"/>
    <property type="project" value="UniProtKB-SubCell"/>
</dbReference>
<dbReference type="GO" id="GO:0008790">
    <property type="term" value="F:arabinose isomerase activity"/>
    <property type="evidence" value="ECO:0007669"/>
    <property type="project" value="TreeGrafter"/>
</dbReference>
<dbReference type="GO" id="GO:0008736">
    <property type="term" value="F:L-fucose isomerase activity"/>
    <property type="evidence" value="ECO:0007669"/>
    <property type="project" value="UniProtKB-UniRule"/>
</dbReference>
<dbReference type="GO" id="GO:0030145">
    <property type="term" value="F:manganese ion binding"/>
    <property type="evidence" value="ECO:0007669"/>
    <property type="project" value="UniProtKB-UniRule"/>
</dbReference>
<dbReference type="GO" id="GO:0019571">
    <property type="term" value="P:D-arabinose catabolic process"/>
    <property type="evidence" value="ECO:0007669"/>
    <property type="project" value="TreeGrafter"/>
</dbReference>
<dbReference type="GO" id="GO:0042355">
    <property type="term" value="P:L-fucose catabolic process"/>
    <property type="evidence" value="ECO:0007669"/>
    <property type="project" value="UniProtKB-UniRule"/>
</dbReference>
<dbReference type="CDD" id="cd03556">
    <property type="entry name" value="L-fucose_isomerase"/>
    <property type="match status" value="1"/>
</dbReference>
<dbReference type="FunFam" id="3.20.14.10:FF:000001">
    <property type="entry name" value="L-fucose isomerase"/>
    <property type="match status" value="1"/>
</dbReference>
<dbReference type="FunFam" id="3.40.50.1070:FF:000001">
    <property type="entry name" value="L-fucose isomerase"/>
    <property type="match status" value="1"/>
</dbReference>
<dbReference type="Gene3D" id="3.40.50.1070">
    <property type="match status" value="1"/>
</dbReference>
<dbReference type="Gene3D" id="3.40.275.10">
    <property type="entry name" value="L-fucose Isomerase, Chain A, domain 2"/>
    <property type="match status" value="1"/>
</dbReference>
<dbReference type="Gene3D" id="3.20.14.10">
    <property type="entry name" value="L-fucose/L-arabinose isomerase, C-terminal"/>
    <property type="match status" value="1"/>
</dbReference>
<dbReference type="HAMAP" id="MF_01254">
    <property type="entry name" value="Fucose_iso"/>
    <property type="match status" value="1"/>
</dbReference>
<dbReference type="InterPro" id="IPR004216">
    <property type="entry name" value="Fuc/Ara_isomerase_C"/>
</dbReference>
<dbReference type="InterPro" id="IPR038393">
    <property type="entry name" value="Fuc_iso_dom3_sf"/>
</dbReference>
<dbReference type="InterPro" id="IPR015888">
    <property type="entry name" value="Fuc_isomerase_C"/>
</dbReference>
<dbReference type="InterPro" id="IPR038391">
    <property type="entry name" value="Fucose_iso_dom1_sf"/>
</dbReference>
<dbReference type="InterPro" id="IPR012888">
    <property type="entry name" value="Fucose_iso_N1"/>
</dbReference>
<dbReference type="InterPro" id="IPR005763">
    <property type="entry name" value="Fucose_isomerase"/>
</dbReference>
<dbReference type="InterPro" id="IPR038392">
    <property type="entry name" value="Fucose_isomerase_dom2_sf"/>
</dbReference>
<dbReference type="InterPro" id="IPR009015">
    <property type="entry name" value="Fucose_isomerase_N/cen_sf"/>
</dbReference>
<dbReference type="InterPro" id="IPR012889">
    <property type="entry name" value="Fucose_isomerase_N2"/>
</dbReference>
<dbReference type="NCBIfam" id="TIGR01089">
    <property type="entry name" value="fucI"/>
    <property type="match status" value="1"/>
</dbReference>
<dbReference type="NCBIfam" id="NF008220">
    <property type="entry name" value="PRK10991.1"/>
    <property type="match status" value="1"/>
</dbReference>
<dbReference type="PANTHER" id="PTHR37840">
    <property type="entry name" value="L-FUCOSE ISOMERASE"/>
    <property type="match status" value="1"/>
</dbReference>
<dbReference type="PANTHER" id="PTHR37840:SF1">
    <property type="entry name" value="L-FUCOSE ISOMERASE"/>
    <property type="match status" value="1"/>
</dbReference>
<dbReference type="Pfam" id="PF02952">
    <property type="entry name" value="Fucose_iso_C"/>
    <property type="match status" value="1"/>
</dbReference>
<dbReference type="Pfam" id="PF07881">
    <property type="entry name" value="Fucose_iso_N1"/>
    <property type="match status" value="1"/>
</dbReference>
<dbReference type="Pfam" id="PF07882">
    <property type="entry name" value="Fucose_iso_N2"/>
    <property type="match status" value="1"/>
</dbReference>
<dbReference type="SUPFAM" id="SSF50443">
    <property type="entry name" value="FucI/AraA C-terminal domain-like"/>
    <property type="match status" value="1"/>
</dbReference>
<dbReference type="SUPFAM" id="SSF53743">
    <property type="entry name" value="FucI/AraA N-terminal and middle domains"/>
    <property type="match status" value="1"/>
</dbReference>
<keyword id="KW-0119">Carbohydrate metabolism</keyword>
<keyword id="KW-0963">Cytoplasm</keyword>
<keyword id="KW-0294">Fucose metabolism</keyword>
<keyword id="KW-0413">Isomerase</keyword>
<keyword id="KW-0464">Manganese</keyword>
<keyword id="KW-0479">Metal-binding</keyword>
<sequence length="588" mass="65890">MIQHPRIGIRPTIDGRRQGVRESLEVQTMNMAKSVADLISSTLKYPDGEPVECVISPSTIGRVPEAAASHELFKKSNVCATITVTPCWCYGSETMDMSPDIPHAIWGFNGTERPGAVYLAAVLASHAQKGIPAFGIYGRDVQEANDTDIPEDVKEKLLRYARAALATGLMRDTAYLSMGSVSMGIGGSIVNPDFFQEYLGMRNESVDMTEFTRRMDRGIYDPEEFERAMVWVKEHIKEGVDRNREDLILSKEEKEKQWEFVIKMFMIGRDLMVGNPRLAELGFEEEAVGHHALVAGFQGQRQWTDHFPNGDFMETFLNTQFDWNGIRKPFVFATENDSLNGVSMLFNYLLTNTPQIFADVRTYWSPEAVERVTGYTLEGRAAAGFLHLINSGSCTLDGTGQATRDGKPVMKPFWELDESEVQAMLENTDFPPANREYFRGGGFSTRFLTKGDMPVTMVRLNLLKGVGPVLQIAEGYTLELPEDVHHTLDNRTDPGWPTTWFAPRLTGKGAFKSVYDVMNNWGANHGAITYGHIGADLITLASMLRIPVNMHNVPEEDIFRPKNWSLFGTEDLESADYRACQLLGPLHK</sequence>
<protein>
    <recommendedName>
        <fullName evidence="1">L-fucose isomerase</fullName>
        <ecNumber evidence="1">5.3.1.25</ecNumber>
    </recommendedName>
    <alternativeName>
        <fullName evidence="1">6-deoxy-L-galactose isomerase</fullName>
    </alternativeName>
    <alternativeName>
        <fullName>FucIase</fullName>
    </alternativeName>
</protein>
<reference key="1">
    <citation type="journal article" date="2009" name="J. Bacteriol.">
        <title>Role of conjugative elements in the evolution of the multidrug-resistant pandemic clone Streptococcus pneumoniae Spain23F ST81.</title>
        <authorList>
            <person name="Croucher N.J."/>
            <person name="Walker D."/>
            <person name="Romero P."/>
            <person name="Lennard N."/>
            <person name="Paterson G.K."/>
            <person name="Bason N.C."/>
            <person name="Mitchell A.M."/>
            <person name="Quail M.A."/>
            <person name="Andrew P.W."/>
            <person name="Parkhill J."/>
            <person name="Bentley S.D."/>
            <person name="Mitchell T.J."/>
        </authorList>
    </citation>
    <scope>NUCLEOTIDE SEQUENCE [LARGE SCALE GENOMIC DNA]</scope>
    <source>
        <strain>ATCC 700669 / Spain 23F-1</strain>
    </source>
</reference>
<proteinExistence type="inferred from homology"/>
<organism>
    <name type="scientific">Streptococcus pneumoniae (strain ATCC 700669 / Spain 23F-1)</name>
    <dbReference type="NCBI Taxonomy" id="561276"/>
    <lineage>
        <taxon>Bacteria</taxon>
        <taxon>Bacillati</taxon>
        <taxon>Bacillota</taxon>
        <taxon>Bacilli</taxon>
        <taxon>Lactobacillales</taxon>
        <taxon>Streptococcaceae</taxon>
        <taxon>Streptococcus</taxon>
    </lineage>
</organism>
<feature type="chain" id="PRO_1000165098" description="L-fucose isomerase">
    <location>
        <begin position="1"/>
        <end position="588"/>
    </location>
</feature>
<feature type="active site" description="Proton acceptor" evidence="1">
    <location>
        <position position="335"/>
    </location>
</feature>
<feature type="active site" description="Proton acceptor" evidence="1">
    <location>
        <position position="359"/>
    </location>
</feature>
<feature type="binding site" evidence="1">
    <location>
        <position position="335"/>
    </location>
    <ligand>
        <name>Mn(2+)</name>
        <dbReference type="ChEBI" id="CHEBI:29035"/>
    </ligand>
</feature>
<feature type="binding site" evidence="1">
    <location>
        <position position="359"/>
    </location>
    <ligand>
        <name>Mn(2+)</name>
        <dbReference type="ChEBI" id="CHEBI:29035"/>
    </ligand>
</feature>
<feature type="binding site" evidence="1">
    <location>
        <position position="525"/>
    </location>
    <ligand>
        <name>Mn(2+)</name>
        <dbReference type="ChEBI" id="CHEBI:29035"/>
    </ligand>
</feature>
<comment type="function">
    <text evidence="1">Converts the aldose L-fucose into the corresponding ketose L-fuculose.</text>
</comment>
<comment type="catalytic activity">
    <reaction evidence="1">
        <text>L-fucose = L-fuculose</text>
        <dbReference type="Rhea" id="RHEA:17233"/>
        <dbReference type="ChEBI" id="CHEBI:2181"/>
        <dbReference type="ChEBI" id="CHEBI:17617"/>
        <dbReference type="EC" id="5.3.1.25"/>
    </reaction>
</comment>
<comment type="cofactor">
    <cofactor evidence="1">
        <name>Mn(2+)</name>
        <dbReference type="ChEBI" id="CHEBI:29035"/>
    </cofactor>
</comment>
<comment type="pathway">
    <text evidence="1">Carbohydrate degradation; L-fucose degradation; L-lactaldehyde and glycerone phosphate from L-fucose: step 1/3.</text>
</comment>
<comment type="subcellular location">
    <subcellularLocation>
        <location evidence="1">Cytoplasm</location>
    </subcellularLocation>
</comment>
<comment type="similarity">
    <text evidence="1">Belongs to the L-fucose isomerase family.</text>
</comment>
<name>FUCI_STRPJ</name>
<gene>
    <name evidence="1" type="primary">fucI</name>
    <name type="ordered locus">SPN23F21900</name>
</gene>